<proteinExistence type="evidence at protein level"/>
<organism>
    <name type="scientific">Mus musculus</name>
    <name type="common">Mouse</name>
    <dbReference type="NCBI Taxonomy" id="10090"/>
    <lineage>
        <taxon>Eukaryota</taxon>
        <taxon>Metazoa</taxon>
        <taxon>Chordata</taxon>
        <taxon>Craniata</taxon>
        <taxon>Vertebrata</taxon>
        <taxon>Euteleostomi</taxon>
        <taxon>Mammalia</taxon>
        <taxon>Eutheria</taxon>
        <taxon>Euarchontoglires</taxon>
        <taxon>Glires</taxon>
        <taxon>Rodentia</taxon>
        <taxon>Myomorpha</taxon>
        <taxon>Muroidea</taxon>
        <taxon>Muridae</taxon>
        <taxon>Murinae</taxon>
        <taxon>Mus</taxon>
        <taxon>Mus</taxon>
    </lineage>
</organism>
<keyword id="KW-0002">3D-structure</keyword>
<keyword id="KW-0007">Acetylation</keyword>
<keyword id="KW-0117">Actin capping</keyword>
<keyword id="KW-0009">Actin-binding</keyword>
<keyword id="KW-0025">Alternative splicing</keyword>
<keyword id="KW-0112">Calmodulin-binding</keyword>
<keyword id="KW-1003">Cell membrane</keyword>
<keyword id="KW-0963">Cytoplasm</keyword>
<keyword id="KW-0206">Cytoskeleton</keyword>
<keyword id="KW-0325">Glycoprotein</keyword>
<keyword id="KW-0472">Membrane</keyword>
<keyword id="KW-0597">Phosphoprotein</keyword>
<keyword id="KW-1185">Reference proteome</keyword>
<keyword id="KW-0677">Repeat</keyword>
<protein>
    <recommendedName>
        <fullName>Spectrin beta chain, non-erythrocytic 1</fullName>
    </recommendedName>
    <alternativeName>
        <fullName>Beta-II spectrin</fullName>
    </alternativeName>
    <alternativeName>
        <fullName>Embryonic liver fodrin</fullName>
    </alternativeName>
    <alternativeName>
        <fullName>Fodrin beta chain</fullName>
    </alternativeName>
</protein>
<evidence type="ECO:0000250" key="1"/>
<evidence type="ECO:0000250" key="2">
    <source>
        <dbReference type="UniProtKB" id="P85986"/>
    </source>
</evidence>
<evidence type="ECO:0000250" key="3">
    <source>
        <dbReference type="UniProtKB" id="Q01082"/>
    </source>
</evidence>
<evidence type="ECO:0000255" key="4"/>
<evidence type="ECO:0000255" key="5">
    <source>
        <dbReference type="PROSITE-ProRule" id="PRU00044"/>
    </source>
</evidence>
<evidence type="ECO:0000255" key="6">
    <source>
        <dbReference type="PROSITE-ProRule" id="PRU00145"/>
    </source>
</evidence>
<evidence type="ECO:0000256" key="7">
    <source>
        <dbReference type="SAM" id="MobiDB-lite"/>
    </source>
</evidence>
<evidence type="ECO:0000269" key="8">
    <source>
    </source>
</evidence>
<evidence type="ECO:0000269" key="9">
    <source>
    </source>
</evidence>
<evidence type="ECO:0000269" key="10">
    <source>
    </source>
</evidence>
<evidence type="ECO:0000269" key="11">
    <source>
    </source>
</evidence>
<evidence type="ECO:0000269" key="12">
    <source>
    </source>
</evidence>
<evidence type="ECO:0000303" key="13">
    <source>
    </source>
</evidence>
<evidence type="ECO:0000303" key="14">
    <source>
    </source>
</evidence>
<evidence type="ECO:0000305" key="15"/>
<evidence type="ECO:0007744" key="16">
    <source>
    </source>
</evidence>
<evidence type="ECO:0007744" key="17">
    <source>
    </source>
</evidence>
<evidence type="ECO:0007744" key="18">
    <source>
    </source>
</evidence>
<evidence type="ECO:0007744" key="19">
    <source>
    </source>
</evidence>
<evidence type="ECO:0007744" key="20">
    <source>
    </source>
</evidence>
<evidence type="ECO:0007744" key="21">
    <source>
    </source>
</evidence>
<evidence type="ECO:0007744" key="22">
    <source>
    </source>
</evidence>
<evidence type="ECO:0007829" key="23">
    <source>
        <dbReference type="PDB" id="1BTN"/>
    </source>
</evidence>
<evidence type="ECO:0007829" key="24">
    <source>
        <dbReference type="PDB" id="1MPH"/>
    </source>
</evidence>
<evidence type="ECO:0007829" key="25">
    <source>
        <dbReference type="PDB" id="6M3P"/>
    </source>
</evidence>
<comment type="function">
    <text evidence="11">Fodrin, which seems to be involved in secretion, interacts with calmodulin in a calcium-dependent manner and is thus candidate for the calcium-dependent movement of the cytoskeleton at the membrane. Plays a critical role in central nervous system development and function.</text>
</comment>
<comment type="subunit">
    <text evidence="2 3 8 9">Interacts with ANK2 (PubMed:15262991). Interacts with CPNE4 (via VWFA domain) (PubMed:12522145). Like erythrocyte spectrin, the spectrin-like proteins are capable to form dimers which can further associate to tetramers (By similarity). Interacts with CAMSAP1 (By similarity). Can form heterodimers with SPTAN1.</text>
</comment>
<comment type="subcellular location">
    <subcellularLocation>
        <location evidence="15">Cytoplasm</location>
        <location evidence="15">Cytoskeleton</location>
    </subcellularLocation>
    <subcellularLocation>
        <location evidence="9">Endomembrane system</location>
    </subcellularLocation>
    <subcellularLocation>
        <location evidence="9">Cytoplasm</location>
        <location evidence="9">Myofibril</location>
        <location evidence="9">Sarcomere</location>
        <location evidence="9">M line</location>
    </subcellularLocation>
    <subcellularLocation>
        <location evidence="3">Cytoplasm</location>
        <location evidence="3">Cytosol</location>
    </subcellularLocation>
    <subcellularLocation>
        <location evidence="3">Cell membrane</location>
    </subcellularLocation>
    <text evidence="9">Colocalizes with ANK2 in a distinct intracellular compartment of neonatal cardiomyocytes.</text>
</comment>
<comment type="subcellular location">
    <molecule>Isoform 2</molecule>
    <subcellularLocation>
        <location evidence="12">Cytoplasm</location>
    </subcellularLocation>
    <subcellularLocation>
        <location evidence="12">Cell membrane</location>
        <topology>Peripheral membrane protein</topology>
        <orientation>Cytoplasmic side</orientation>
    </subcellularLocation>
</comment>
<comment type="alternative products">
    <event type="alternative splicing"/>
    <isoform>
        <id>Q62261-1</id>
        <name>1</name>
        <sequence type="displayed"/>
    </isoform>
    <isoform>
        <id>Q62261-2</id>
        <name>2</name>
        <name>Elf3</name>
        <sequence type="described" ref="VSP_026057 VSP_026058 VSP_026059"/>
    </isoform>
</comment>
<comment type="tissue specificity">
    <text evidence="9 12">Isoform 2 is present in brain, heart, kidney and liver (at protein level).</text>
</comment>
<comment type="developmental stage">
    <text evidence="12">Isoform 2 is expressed in brain, heart and liver throughout embryonic development. Isoform 1 is mainly expressed in neonatal developing ventricular cardiomyocytes.</text>
</comment>
<comment type="similarity">
    <text evidence="15">Belongs to the spectrin family.</text>
</comment>
<accession>Q62261</accession>
<accession>A2AFU1</accession>
<accession>Q3TEM7</accession>
<accession>Q5SQL8</accession>
<accession>Q5SQL9</accession>
<accession>Q9QWJ7</accession>
<sequence>MTTTVATDYDNIEIQQQYSDVNNRWDVDDWDNENSSARLFERSRIKALADEREAVQKKTFTKWVNSHLARVSCRITDLYTDLRDGRMLIKLLEVLSGERLPKPTKGRMRIHCLENVDKALQFLKEQRVHLENMGSHDIVDGNHRLTLGLIWTIILRFQIQDISVETEDNKEKKSAKDALLLWCQMKTAGYPNVNIHNFTTSWRDGMAFNALIHKHRPDLIDFDKLKKSNAHYNLQNAFNLAEQHLGLTKLLDPEDISVDHPDEKSIITYVVTYYHYFSKMKALAVEGKRIGKVLDNAIETEKMIEKYESLASDLLEWIEQTIIILNNRKFANSLVGVQQQLQAFNTYRTVEKPPKFTEKGNLEVLLFTIQSKMRANNQKVYMPREGKLISDINKAWERLEKAEHERELALRNELIRQEKLEQLARRFDRKAAMRETWLSENQRLVSQDNFGFDLPAVEAATKKHEAIETDIAAYEERVQAVVAVARELEAENYHDIKRITARKDNVIRLWEYLLELLRARRQRLEMNLGLQKIFQEMLYIMDWMDEMKVLLLSQDYGKHLLGVEDLLQKHALVEADIAIQAERVRGVNASAQKFATDGEGYKPCDPQVIRDRVAHMEFCYQELCQLAAERRARLEESRRLWKFFWEMAEEEGWIREKEKILSSDDYGKDLTSVMRLLSKHRAFEDEMSGRSGHFEQAIKEGEDMIAEEHFGSEKIRERIIYIREQWANLEQLSAIRKKRLEEASLLHQFQADADDIDAWMLDILKIVSSNDVGHDEYSTQSLVKKHKDVAEEITNYRPTIDTLHEQASALPQAHAESPDVKGRLAGIEERCKEMAELTRLRKQALQDTLALYKMFSEADACELWIDEKEQWLNNMQIPEKLEDLEVIQHRFESLEPEMNNQASRVAVVNQIARQLMHNGHPSEKEIRAQQDKLNTRWSQFRELVDRKKDALLSALSIQNYHLECNETKSWIREKTKVIESTQDLGNDLAGVMALQRKLTGMERDLVAIEAKLSDLQKEAEKLESEHPDQAQAILSRLAEISDVWEEMKTTLKNREASLGEASKLQQFLRDLDDFQSWLSRTQTAIASEDMPNTLTEAEKLLTQHENIKNEIDNYEEDYQKMRDMGEMVTQGQTDAQYMFLRQRLQALDTGWNELHKMWENRQNLLSQSHAYQQFLRDTKQAEAFLNNQEYVLAHTEMPTTLEGAEAAIKKQEDFMTTMDANEEKINAVVETGRRLVSDGNINSDRIQEKVDSIDDRHRKNREAASELLMRLKDNRDLQKFLQDCQELSLWINEKMLTAQDMSYDEARNLHSKWLKHQAFMAELASNKEWLDKIEKEGMQLISEKPETEAVVKEKLTGLHKMWEVLESTTQTKAQRLFDANKAELFTQSCADLDKWLHGLESQIQSDDYGKDLTSVNILLKKQQMLENQMEVRKKEIEELQSQAQALSQEGKSTDEVDSKRLTVQTKFMELLEPLSERKHNLLASKEIHQFNRDVEDEILWVGERMPLATSTDHGHNLQTVQLLIKKNQTLQKEIQGHQPRIDDIFERSQNIITDSSSLNAEAIRQRLADLKQLWGLLIEETEKRHRRLEEAHKAQQYYFDAAEAEAWMSEQELYMMSEEKAKDEQSAVSMLKKHQILEQAVEDYAETVHQLSKTSRALVADSHPESERISMRQSKVDKLYAGLKDLAEERRGKLDERHRLFQLNREVDDLEQWIAEREVVAGSHELGQDYEHVTMLQERFREFARDTGNIGQERVDTVNNMADELINSGHSDAATIAEWKDGLNEAWADLLELIDTRTQILAASYELHKFYHDAKEIFGRIQDKHKKLPEELGRDQNTVETLQRMHTTFEHDIQALGTQVRQLQEDAARLQAAYAGDKADDIQKRENEVLEAWKSLLDACEGRRVRLVDTGDKFRFFSMVRDLMLWMEDVIRQIEAQEKPRDVSSVELLMNNHQGIKAEIDARNDSFTACIELGKSLLARKHYASEEIKEKLLQLTEKRKEMIDKWEDRWEWLRLILEVHQFSRDASVAEAWLLGQEPYLSSREIGQSVDEVEKLIKRHEAFEKSAATWDERFSALERLTTLELLEVRRQQEEEERKRRPPSPDPNTKVSEEAESQQWDTSKGDQVSQNGLPAEQGSPRMAGTMETSEMVNGAAEQRTSSKESSPVPSPTLDRKAKSALPAQSAATLPARTLETPAAQMEGFLNRKHEWEAHNKKASSRSWHNVYCVINNQEMGFYKDAKSAASGIPYHSEVPVSLKEAICEVALDYKKKKHVFKLRLSDGNEYLFQAKDDEEMNTWIQAISSAISSDKHDTSASTQSTPASSRAQTLPTSVVTITSESSPGKREKDKEKDKEKRFSLFGKKK</sequence>
<feature type="initiator methionine" description="Removed" evidence="3">
    <location>
        <position position="1"/>
    </location>
</feature>
<feature type="chain" id="PRO_0000073462" description="Spectrin beta chain, non-erythrocytic 1">
    <location>
        <begin position="2"/>
        <end position="2363"/>
    </location>
</feature>
<feature type="domain" description="Calponin-homology (CH) 1" evidence="5">
    <location>
        <begin position="54"/>
        <end position="158"/>
    </location>
</feature>
<feature type="domain" description="Calponin-homology (CH) 2" evidence="5">
    <location>
        <begin position="173"/>
        <end position="278"/>
    </location>
</feature>
<feature type="repeat" description="Spectrin 1" evidence="4">
    <location>
        <begin position="303"/>
        <end position="411"/>
    </location>
</feature>
<feature type="repeat" description="Spectrin 2" evidence="4">
    <location>
        <begin position="423"/>
        <end position="525"/>
    </location>
</feature>
<feature type="repeat" description="Spectrin 3" evidence="4">
    <location>
        <begin position="530"/>
        <end position="636"/>
    </location>
</feature>
<feature type="repeat" description="Spectrin 4" evidence="4">
    <location>
        <begin position="639"/>
        <end position="742"/>
    </location>
</feature>
<feature type="repeat" description="Spectrin 5" evidence="4">
    <location>
        <begin position="745"/>
        <end position="847"/>
    </location>
</feature>
<feature type="repeat" description="Spectrin 6" evidence="4">
    <location>
        <begin position="850"/>
        <end position="952"/>
    </location>
</feature>
<feature type="repeat" description="Spectrin 7" evidence="4">
    <location>
        <begin position="957"/>
        <end position="1060"/>
    </location>
</feature>
<feature type="repeat" description="Spectrin 8" evidence="4">
    <location>
        <begin position="1063"/>
        <end position="1166"/>
    </location>
</feature>
<feature type="repeat" description="Spectrin 9" evidence="4">
    <location>
        <begin position="1170"/>
        <end position="1259"/>
    </location>
</feature>
<feature type="repeat" description="Spectrin 10" evidence="4">
    <location>
        <begin position="1276"/>
        <end position="1376"/>
    </location>
</feature>
<feature type="repeat" description="Spectrin 11" evidence="4">
    <location>
        <begin position="1381"/>
        <end position="1482"/>
    </location>
</feature>
<feature type="repeat" description="Spectrin 12" evidence="4">
    <location>
        <begin position="1486"/>
        <end position="1590"/>
    </location>
</feature>
<feature type="repeat" description="Spectrin 13" evidence="4">
    <location>
        <begin position="1592"/>
        <end position="1696"/>
    </location>
</feature>
<feature type="repeat" description="Spectrin 14" evidence="4">
    <location>
        <begin position="1698"/>
        <end position="1801"/>
    </location>
</feature>
<feature type="repeat" description="Spectrin 15" evidence="4">
    <location>
        <begin position="1805"/>
        <end position="1907"/>
    </location>
</feature>
<feature type="repeat" description="Spectrin 16" evidence="4">
    <location>
        <begin position="1914"/>
        <end position="2014"/>
    </location>
</feature>
<feature type="repeat" description="Spectrin 17" evidence="4">
    <location>
        <begin position="2018"/>
        <end position="2097"/>
    </location>
</feature>
<feature type="domain" description="PH" evidence="6">
    <location>
        <begin position="2196"/>
        <end position="2306"/>
    </location>
</feature>
<feature type="region of interest" description="Actin-binding">
    <location>
        <begin position="2"/>
        <end position="275"/>
    </location>
</feature>
<feature type="region of interest" description="Interaction with ANK2" evidence="1">
    <location>
        <begin position="1563"/>
        <end position="2093"/>
    </location>
</feature>
<feature type="region of interest" description="Disordered" evidence="7">
    <location>
        <begin position="2089"/>
        <end position="2193"/>
    </location>
</feature>
<feature type="region of interest" description="Mediates interaction with CAMSAP1" evidence="1">
    <location>
        <begin position="2148"/>
        <end position="2176"/>
    </location>
</feature>
<feature type="region of interest" description="Disordered" evidence="7">
    <location>
        <begin position="2308"/>
        <end position="2363"/>
    </location>
</feature>
<feature type="compositionally biased region" description="Polar residues" evidence="7">
    <location>
        <begin position="2115"/>
        <end position="2130"/>
    </location>
</feature>
<feature type="compositionally biased region" description="Low complexity" evidence="7">
    <location>
        <begin position="2313"/>
        <end position="2327"/>
    </location>
</feature>
<feature type="compositionally biased region" description="Polar residues" evidence="7">
    <location>
        <begin position="2328"/>
        <end position="2340"/>
    </location>
</feature>
<feature type="compositionally biased region" description="Basic and acidic residues" evidence="7">
    <location>
        <begin position="2341"/>
        <end position="2356"/>
    </location>
</feature>
<feature type="modified residue" description="N-acetylthreonine" evidence="3">
    <location>
        <position position="2"/>
    </location>
</feature>
<feature type="modified residue" description="Phosphoserine" evidence="22">
    <location>
        <position position="36"/>
    </location>
</feature>
<feature type="modified residue" description="N6-acetyllysine" evidence="3">
    <location>
        <position position="90"/>
    </location>
</feature>
<feature type="modified residue" description="Phosphoserine" evidence="22">
    <location>
        <position position="228"/>
    </location>
</feature>
<feature type="modified residue" description="Phosphoserine" evidence="22">
    <location>
        <position position="817"/>
    </location>
</feature>
<feature type="modified residue" description="Phosphoserine" evidence="22">
    <location>
        <position position="903"/>
    </location>
</feature>
<feature type="modified residue" description="Phosphoserine" evidence="3">
    <location>
        <position position="1057"/>
    </location>
</feature>
<feature type="modified residue" description="Phosphoserine" evidence="22">
    <location>
        <position position="1076"/>
    </location>
</feature>
<feature type="modified residue" description="Phosphoserine" evidence="22">
    <location>
        <position position="1079"/>
    </location>
</feature>
<feature type="modified residue" description="Phosphoserine" evidence="3">
    <location>
        <position position="1237"/>
    </location>
</feature>
<feature type="modified residue" description="Phosphoserine" evidence="3">
    <location>
        <position position="1388"/>
    </location>
</feature>
<feature type="modified residue" description="Phosphoserine" evidence="3">
    <location>
        <position position="1447"/>
    </location>
</feature>
<feature type="modified residue" description="Phosphoserine" evidence="3">
    <location>
        <position position="1557"/>
    </location>
</feature>
<feature type="modified residue" description="Phosphotyrosine" evidence="19">
    <location>
        <position position="1805"/>
    </location>
</feature>
<feature type="modified residue" description="N6-acetyllysine" evidence="3">
    <location>
        <position position="1815"/>
    </location>
</feature>
<feature type="modified residue" description="N6-acetyllysine" evidence="3">
    <location>
        <position position="1913"/>
    </location>
</feature>
<feature type="modified residue" description="N6-acetyllysine" evidence="3">
    <location>
        <position position="1989"/>
    </location>
</feature>
<feature type="modified residue" description="Phosphoserine" evidence="17 20 22">
    <location>
        <position position="2102"/>
    </location>
</feature>
<feature type="modified residue" description="Phosphoserine" evidence="16 22">
    <location>
        <position position="2127"/>
    </location>
</feature>
<feature type="modified residue" description="Phosphoserine" evidence="16 18 22">
    <location>
        <position position="2137"/>
    </location>
</feature>
<feature type="modified residue" description="Phosphothreonine" evidence="22">
    <location>
        <position position="2146"/>
    </location>
</feature>
<feature type="modified residue" description="Phosphoserine" evidence="22">
    <location>
        <position position="2147"/>
    </location>
</feature>
<feature type="modified residue" description="Phosphothreonine" evidence="22">
    <location>
        <position position="2158"/>
    </location>
</feature>
<feature type="modified residue" description="Phosphoserine" evidence="3">
    <location>
        <position position="2159"/>
    </location>
</feature>
<feature type="modified residue" description="Phosphoserine" evidence="22">
    <location>
        <position position="2160"/>
    </location>
</feature>
<feature type="modified residue" description="Phosphoserine" evidence="22">
    <location>
        <position position="2163"/>
    </location>
</feature>
<feature type="modified residue" description="Phosphoserine" evidence="21 22">
    <location>
        <position position="2164"/>
    </location>
</feature>
<feature type="modified residue" description="Phosphoserine" evidence="21 22">
    <location>
        <position position="2168"/>
    </location>
</feature>
<feature type="modified residue" description="Phosphothreonine" evidence="22">
    <location>
        <position position="2170"/>
    </location>
</feature>
<feature type="modified residue" description="Phosphoserine" evidence="22">
    <location>
        <position position="2183"/>
    </location>
</feature>
<feature type="modified residue" description="Phosphothreonine" evidence="22">
    <location>
        <position position="2186"/>
    </location>
</feature>
<feature type="modified residue" description="Phosphothreonine" evidence="17 22">
    <location>
        <position position="2194"/>
    </location>
</feature>
<feature type="modified residue" description="Phosphoserine" evidence="3">
    <location>
        <position position="2313"/>
    </location>
</feature>
<feature type="modified residue" description="Phosphoserine" evidence="3">
    <location>
        <position position="2318"/>
    </location>
</feature>
<feature type="modified residue" description="Phosphothreonine" evidence="3">
    <location>
        <position position="2319"/>
    </location>
</feature>
<feature type="modified residue" description="Phosphothreonine" evidence="3">
    <location>
        <position position="2327"/>
    </location>
</feature>
<feature type="modified residue" description="Phosphoserine" evidence="3">
    <location>
        <position position="2339"/>
    </location>
</feature>
<feature type="modified residue" description="Phosphoserine" evidence="22">
    <location>
        <position position="2340"/>
    </location>
</feature>
<feature type="glycosylation site" description="O-linked (GlcNAc) serine" evidence="10">
    <location>
        <position position="2323"/>
    </location>
</feature>
<feature type="splice variant" id="VSP_026057" description="In isoform 2." evidence="13 14">
    <original>MTTTVATDYDNIEIQQQYSDVNNRWDVDDWDNENSSARLFERSRIKALA</original>
    <variation>MELQRTSSISGPLSPAYTGQVPYNYNQLEGRFKQLQ</variation>
    <location>
        <begin position="1"/>
        <end position="49"/>
    </location>
</feature>
<feature type="splice variant" id="VSP_026058" description="In isoform 2." evidence="13 14">
    <original>MAGTMETSEMVNGAAEQRTSSKESSPVPSPTLDRKAKSALPAQSAATLPARTLETPAAQMEGFLNRKHEWEAHNKKASSRSWHNVYCVINNQEMGFYKDAKSAASGI</original>
    <variation>VSYRSQTYQNYKNFNSRRTASDHSWSGM</variation>
    <location>
        <begin position="2140"/>
        <end position="2246"/>
    </location>
</feature>
<feature type="splice variant" id="VSP_026059" description="In isoform 2." evidence="13 14">
    <location>
        <begin position="2247"/>
        <end position="2363"/>
    </location>
</feature>
<feature type="sequence conflict" description="In Ref. 4; BAE41221." evidence="15" ref="4">
    <original>D</original>
    <variation>A</variation>
    <location>
        <position position="252"/>
    </location>
</feature>
<feature type="sequence conflict" description="In Ref. 2; AAD01616." evidence="15" ref="2">
    <original>S</original>
    <variation>T</variation>
    <location>
        <position position="309"/>
    </location>
</feature>
<feature type="sequence conflict" description="In Ref. 2; AAD01616." evidence="15" ref="2">
    <original>T</original>
    <variation>A</variation>
    <location>
        <position position="368"/>
    </location>
</feature>
<feature type="sequence conflict" description="In Ref. 1; AAC42040." evidence="15" ref="1">
    <original>K</original>
    <variation>I</variation>
    <location>
        <position position="737"/>
    </location>
</feature>
<feature type="sequence conflict" description="In Ref. 2; AAD01616." evidence="15" ref="2">
    <original>Y</original>
    <variation>C</variation>
    <location>
        <position position="796"/>
    </location>
</feature>
<feature type="sequence conflict" description="In Ref. 1; AAC42040." evidence="15" ref="1">
    <original>Q</original>
    <variation>R</variation>
    <location>
        <position position="846"/>
    </location>
</feature>
<feature type="sequence conflict" description="In Ref. 2; AAD01616." evidence="15" ref="2">
    <original>W</original>
    <variation>C</variation>
    <location>
        <position position="970"/>
    </location>
</feature>
<feature type="sequence conflict" description="In Ref. 2; AAD01616." evidence="15" ref="2">
    <original>R</original>
    <variation>C</variation>
    <location>
        <position position="996"/>
    </location>
</feature>
<feature type="sequence conflict" description="In Ref. 1; AAC42040." evidence="15" ref="1">
    <original>SQI</original>
    <variation>KPGF</variation>
    <location>
        <begin position="1401"/>
        <end position="1403"/>
    </location>
</feature>
<feature type="sequence conflict" description="In Ref. 1; AAC42040." evidence="15" ref="1">
    <original>SVNILLKKQQMLENQMEVRKKEIEELQSQAQALSQEGKSTDE</original>
    <variation>QSQYSSEKGNRRRRIRWKFGRKRSRNCRPSPGSSRGRAQMR</variation>
    <location>
        <begin position="1414"/>
        <end position="1455"/>
    </location>
</feature>
<feature type="sequence conflict" description="In Ref. 1; AAC42040." evidence="15" ref="1">
    <original>A</original>
    <variation>R</variation>
    <location>
        <position position="1508"/>
    </location>
</feature>
<feature type="sequence conflict" description="In Ref. 1; AAC42040." evidence="15" ref="1">
    <original>EKAKDE</original>
    <variation>KRPRMK</variation>
    <location>
        <begin position="1619"/>
        <end position="1624"/>
    </location>
</feature>
<feature type="sequence conflict" description="In Ref. 1; AAC42040." evidence="15" ref="1">
    <original>D</original>
    <variation>G</variation>
    <location>
        <position position="1898"/>
    </location>
</feature>
<feature type="sequence conflict" description="In Ref. 1; AAC42040." evidence="15" ref="1">
    <original>L</original>
    <variation>S</variation>
    <location>
        <position position="2171"/>
    </location>
</feature>
<feature type="sequence conflict" description="In Ref. 1; AAC42040." evidence="15" ref="1">
    <original>EK</original>
    <variation>AE</variation>
    <location>
        <begin position="2345"/>
        <end position="2346"/>
    </location>
</feature>
<feature type="sequence conflict" description="In Ref. 1; AAC42040." evidence="15" ref="1">
    <original>FSL</original>
    <variation>STV</variation>
    <location>
        <begin position="2356"/>
        <end position="2358"/>
    </location>
</feature>
<feature type="helix" evidence="25">
    <location>
        <begin position="1602"/>
        <end position="1615"/>
    </location>
</feature>
<feature type="helix" evidence="25">
    <location>
        <begin position="1624"/>
        <end position="1656"/>
    </location>
</feature>
<feature type="turn" evidence="25">
    <location>
        <begin position="1658"/>
        <end position="1661"/>
    </location>
</feature>
<feature type="helix" evidence="25">
    <location>
        <begin position="1666"/>
        <end position="1722"/>
    </location>
</feature>
<feature type="helix" evidence="25">
    <location>
        <begin position="1730"/>
        <end position="1768"/>
    </location>
</feature>
<feature type="turn" evidence="25">
    <location>
        <begin position="1771"/>
        <end position="1774"/>
    </location>
</feature>
<feature type="helix" evidence="25">
    <location>
        <begin position="1775"/>
        <end position="1827"/>
    </location>
</feature>
<feature type="turn" evidence="25">
    <location>
        <begin position="1828"/>
        <end position="1830"/>
    </location>
</feature>
<feature type="helix" evidence="25">
    <location>
        <begin position="1838"/>
        <end position="1847"/>
    </location>
</feature>
<feature type="helix" evidence="25">
    <location>
        <begin position="1849"/>
        <end position="1873"/>
    </location>
</feature>
<feature type="helix" evidence="25">
    <location>
        <begin position="1877"/>
        <end position="1901"/>
    </location>
</feature>
<feature type="strand" evidence="23">
    <location>
        <begin position="2200"/>
        <end position="2209"/>
    </location>
</feature>
<feature type="strand" evidence="24">
    <location>
        <begin position="2211"/>
        <end position="2213"/>
    </location>
</feature>
<feature type="strand" evidence="23">
    <location>
        <begin position="2222"/>
        <end position="2229"/>
    </location>
</feature>
<feature type="strand" evidence="23">
    <location>
        <begin position="2232"/>
        <end position="2238"/>
    </location>
</feature>
<feature type="helix" evidence="23">
    <location>
        <begin position="2239"/>
        <end position="2244"/>
    </location>
</feature>
<feature type="strand" evidence="23">
    <location>
        <begin position="2248"/>
        <end position="2250"/>
    </location>
</feature>
<feature type="strand" evidence="24">
    <location>
        <begin position="2253"/>
        <end position="2255"/>
    </location>
</feature>
<feature type="strand" evidence="23">
    <location>
        <begin position="2260"/>
        <end position="2263"/>
    </location>
</feature>
<feature type="strand" evidence="23">
    <location>
        <begin position="2269"/>
        <end position="2277"/>
    </location>
</feature>
<feature type="strand" evidence="23">
    <location>
        <begin position="2283"/>
        <end position="2287"/>
    </location>
</feature>
<feature type="helix" evidence="23">
    <location>
        <begin position="2291"/>
        <end position="2303"/>
    </location>
</feature>
<feature type="modified residue" description="Phosphoserine" evidence="22">
    <location sequence="Q62261-2">
        <position position="14"/>
    </location>
</feature>
<dbReference type="EMBL" id="M74773">
    <property type="protein sequence ID" value="AAC42040.1"/>
    <property type="molecule type" value="mRNA"/>
</dbReference>
<dbReference type="EMBL" id="AF017112">
    <property type="protein sequence ID" value="AAD01616.1"/>
    <property type="molecule type" value="mRNA"/>
</dbReference>
<dbReference type="EMBL" id="AL672225">
    <property type="status" value="NOT_ANNOTATED_CDS"/>
    <property type="molecule type" value="Genomic_DNA"/>
</dbReference>
<dbReference type="EMBL" id="AL731792">
    <property type="status" value="NOT_ANNOTATED_CDS"/>
    <property type="molecule type" value="Genomic_DNA"/>
</dbReference>
<dbReference type="EMBL" id="AK169544">
    <property type="protein sequence ID" value="BAE41221.1"/>
    <property type="molecule type" value="mRNA"/>
</dbReference>
<dbReference type="CCDS" id="CCDS24506.1">
    <molecule id="Q62261-2"/>
</dbReference>
<dbReference type="CCDS" id="CCDS36123.1">
    <molecule id="Q62261-1"/>
</dbReference>
<dbReference type="RefSeq" id="NP_033286.2">
    <molecule id="Q62261-2"/>
    <property type="nucleotide sequence ID" value="NM_009260.2"/>
</dbReference>
<dbReference type="RefSeq" id="NP_787030.2">
    <molecule id="Q62261-1"/>
    <property type="nucleotide sequence ID" value="NM_175836.2"/>
</dbReference>
<dbReference type="RefSeq" id="XP_006514662.1">
    <molecule id="Q62261-1"/>
    <property type="nucleotide sequence ID" value="XM_006514599.4"/>
</dbReference>
<dbReference type="RefSeq" id="XP_006514663.1">
    <molecule id="Q62261-1"/>
    <property type="nucleotide sequence ID" value="XM_006514600.5"/>
</dbReference>
<dbReference type="RefSeq" id="XP_030101596.1">
    <molecule id="Q62261-1"/>
    <property type="nucleotide sequence ID" value="XM_030245736.1"/>
</dbReference>
<dbReference type="PDB" id="1BTN">
    <property type="method" value="X-ray"/>
    <property type="resolution" value="2.00 A"/>
    <property type="chains" value="A=2199-2304"/>
</dbReference>
<dbReference type="PDB" id="1MPH">
    <property type="method" value="NMR"/>
    <property type="chains" value="A=2199-2304"/>
</dbReference>
<dbReference type="PDB" id="6M3P">
    <property type="method" value="X-ray"/>
    <property type="resolution" value="3.31 A"/>
    <property type="chains" value="A/B=1591-1910"/>
</dbReference>
<dbReference type="PDBsum" id="1BTN"/>
<dbReference type="PDBsum" id="1MPH"/>
<dbReference type="PDBsum" id="6M3P"/>
<dbReference type="SMR" id="Q62261"/>
<dbReference type="BioGRID" id="203461">
    <property type="interactions" value="59"/>
</dbReference>
<dbReference type="CORUM" id="Q62261"/>
<dbReference type="DIP" id="DIP-31558N"/>
<dbReference type="FunCoup" id="Q62261">
    <property type="interactions" value="2051"/>
</dbReference>
<dbReference type="IntAct" id="Q62261">
    <property type="interactions" value="35"/>
</dbReference>
<dbReference type="MINT" id="Q62261"/>
<dbReference type="STRING" id="10090.ENSMUSP00000006629"/>
<dbReference type="GlyCosmos" id="Q62261">
    <property type="glycosylation" value="1 site, No reported glycans"/>
</dbReference>
<dbReference type="GlyGen" id="Q62261">
    <property type="glycosylation" value="7 sites, 2 N-linked glycans (2 sites), 1 O-linked glycan (5 sites)"/>
</dbReference>
<dbReference type="iPTMnet" id="Q62261"/>
<dbReference type="MetOSite" id="Q62261"/>
<dbReference type="PhosphoSitePlus" id="Q62261"/>
<dbReference type="SwissPalm" id="Q62261"/>
<dbReference type="jPOST" id="Q62261"/>
<dbReference type="PaxDb" id="10090-ENSMUSP00000099902"/>
<dbReference type="PeptideAtlas" id="Q62261"/>
<dbReference type="ProteomicsDB" id="261642">
    <molecule id="Q62261-1"/>
</dbReference>
<dbReference type="ProteomicsDB" id="261643">
    <molecule id="Q62261-2"/>
</dbReference>
<dbReference type="Pumba" id="Q62261"/>
<dbReference type="Antibodypedia" id="2181">
    <property type="antibodies" value="194 antibodies from 34 providers"/>
</dbReference>
<dbReference type="DNASU" id="20742"/>
<dbReference type="Ensembl" id="ENSMUST00000006629.14">
    <molecule id="Q62261-1"/>
    <property type="protein sequence ID" value="ENSMUSP00000006629.8"/>
    <property type="gene ID" value="ENSMUSG00000020315.19"/>
</dbReference>
<dbReference type="Ensembl" id="ENSMUST00000011877.13">
    <molecule id="Q62261-1"/>
    <property type="protein sequence ID" value="ENSMUSP00000011877.7"/>
    <property type="gene ID" value="ENSMUSG00000020315.19"/>
</dbReference>
<dbReference type="Ensembl" id="ENSMUST00000102838.10">
    <molecule id="Q62261-2"/>
    <property type="protein sequence ID" value="ENSMUSP00000099902.4"/>
    <property type="gene ID" value="ENSMUSG00000020315.19"/>
</dbReference>
<dbReference type="GeneID" id="20742"/>
<dbReference type="KEGG" id="mmu:20742"/>
<dbReference type="UCSC" id="uc007ihs.1">
    <molecule id="Q62261-1"/>
    <property type="organism name" value="mouse"/>
</dbReference>
<dbReference type="UCSC" id="uc007iht.1">
    <molecule id="Q62261-2"/>
    <property type="organism name" value="mouse"/>
</dbReference>
<dbReference type="AGR" id="MGI:98388"/>
<dbReference type="CTD" id="6711"/>
<dbReference type="MGI" id="MGI:98388">
    <property type="gene designation" value="Sptbn1"/>
</dbReference>
<dbReference type="VEuPathDB" id="HostDB:ENSMUSG00000020315"/>
<dbReference type="eggNOG" id="KOG0517">
    <property type="taxonomic scope" value="Eukaryota"/>
</dbReference>
<dbReference type="GeneTree" id="ENSGT00940000154864"/>
<dbReference type="HOGENOM" id="CLU_000146_0_0_1"/>
<dbReference type="InParanoid" id="Q62261"/>
<dbReference type="OMA" id="XMLENQM"/>
<dbReference type="OrthoDB" id="5865767at2759"/>
<dbReference type="PhylomeDB" id="Q62261"/>
<dbReference type="TreeFam" id="TF313446"/>
<dbReference type="Reactome" id="R-MMU-375165">
    <property type="pathway name" value="NCAM signaling for neurite out-growth"/>
</dbReference>
<dbReference type="Reactome" id="R-MMU-445095">
    <property type="pathway name" value="Interaction between L1 and Ankyrins"/>
</dbReference>
<dbReference type="Reactome" id="R-MMU-5673001">
    <property type="pathway name" value="RAF/MAP kinase cascade"/>
</dbReference>
<dbReference type="Reactome" id="R-MMU-6807878">
    <property type="pathway name" value="COPI-mediated anterograde transport"/>
</dbReference>
<dbReference type="Reactome" id="R-MMU-9013420">
    <property type="pathway name" value="RHOU GTPase cycle"/>
</dbReference>
<dbReference type="Reactome" id="R-MMU-9013424">
    <property type="pathway name" value="RHOV GTPase cycle"/>
</dbReference>
<dbReference type="BioGRID-ORCS" id="20742">
    <property type="hits" value="1 hit in 77 CRISPR screens"/>
</dbReference>
<dbReference type="CD-CODE" id="CE726F99">
    <property type="entry name" value="Postsynaptic density"/>
</dbReference>
<dbReference type="ChiTaRS" id="Sptbn1">
    <property type="organism name" value="mouse"/>
</dbReference>
<dbReference type="EvolutionaryTrace" id="Q62261"/>
<dbReference type="PRO" id="PR:Q62261"/>
<dbReference type="Proteomes" id="UP000000589">
    <property type="component" value="Chromosome 11"/>
</dbReference>
<dbReference type="RNAct" id="Q62261">
    <property type="molecule type" value="protein"/>
</dbReference>
<dbReference type="Bgee" id="ENSMUSG00000020315">
    <property type="expression patterns" value="Expressed in right lung and 267 other cell types or tissues"/>
</dbReference>
<dbReference type="ExpressionAtlas" id="Q62261">
    <property type="expression patterns" value="baseline and differential"/>
</dbReference>
<dbReference type="GO" id="GO:0030673">
    <property type="term" value="C:axolemma"/>
    <property type="evidence" value="ECO:0000314"/>
    <property type="project" value="BHF-UCL"/>
</dbReference>
<dbReference type="GO" id="GO:0030863">
    <property type="term" value="C:cortical cytoskeleton"/>
    <property type="evidence" value="ECO:0000314"/>
    <property type="project" value="MGI"/>
</dbReference>
<dbReference type="GO" id="GO:0032437">
    <property type="term" value="C:cuticular plate"/>
    <property type="evidence" value="ECO:0000314"/>
    <property type="project" value="MGI"/>
</dbReference>
<dbReference type="GO" id="GO:0005829">
    <property type="term" value="C:cytosol"/>
    <property type="evidence" value="ECO:0000250"/>
    <property type="project" value="UniProtKB"/>
</dbReference>
<dbReference type="GO" id="GO:0012505">
    <property type="term" value="C:endomembrane system"/>
    <property type="evidence" value="ECO:0007669"/>
    <property type="project" value="UniProtKB-SubCell"/>
</dbReference>
<dbReference type="GO" id="GO:0098978">
    <property type="term" value="C:glutamatergic synapse"/>
    <property type="evidence" value="ECO:0007669"/>
    <property type="project" value="Ensembl"/>
</dbReference>
<dbReference type="GO" id="GO:0031430">
    <property type="term" value="C:M band"/>
    <property type="evidence" value="ECO:0000314"/>
    <property type="project" value="BHF-UCL"/>
</dbReference>
<dbReference type="GO" id="GO:0016020">
    <property type="term" value="C:membrane"/>
    <property type="evidence" value="ECO:0000314"/>
    <property type="project" value="MGI"/>
</dbReference>
<dbReference type="GO" id="GO:0005730">
    <property type="term" value="C:nucleolus"/>
    <property type="evidence" value="ECO:0007669"/>
    <property type="project" value="Ensembl"/>
</dbReference>
<dbReference type="GO" id="GO:0005634">
    <property type="term" value="C:nucleus"/>
    <property type="evidence" value="ECO:0000314"/>
    <property type="project" value="MGI"/>
</dbReference>
<dbReference type="GO" id="GO:0005886">
    <property type="term" value="C:plasma membrane"/>
    <property type="evidence" value="ECO:0000314"/>
    <property type="project" value="MGI"/>
</dbReference>
<dbReference type="GO" id="GO:0014069">
    <property type="term" value="C:postsynaptic density"/>
    <property type="evidence" value="ECO:0000314"/>
    <property type="project" value="MGI"/>
</dbReference>
<dbReference type="GO" id="GO:0008091">
    <property type="term" value="C:spectrin"/>
    <property type="evidence" value="ECO:0007669"/>
    <property type="project" value="InterPro"/>
</dbReference>
<dbReference type="GO" id="GO:0003779">
    <property type="term" value="F:actin binding"/>
    <property type="evidence" value="ECO:0007669"/>
    <property type="project" value="UniProtKB-KW"/>
</dbReference>
<dbReference type="GO" id="GO:0030506">
    <property type="term" value="F:ankyrin binding"/>
    <property type="evidence" value="ECO:0007669"/>
    <property type="project" value="Ensembl"/>
</dbReference>
<dbReference type="GO" id="GO:0005516">
    <property type="term" value="F:calmodulin binding"/>
    <property type="evidence" value="ECO:0007669"/>
    <property type="project" value="UniProtKB-KW"/>
</dbReference>
<dbReference type="GO" id="GO:0051020">
    <property type="term" value="F:GTPase binding"/>
    <property type="evidence" value="ECO:0007669"/>
    <property type="project" value="Ensembl"/>
</dbReference>
<dbReference type="GO" id="GO:0005543">
    <property type="term" value="F:phospholipid binding"/>
    <property type="evidence" value="ECO:0007669"/>
    <property type="project" value="InterPro"/>
</dbReference>
<dbReference type="GO" id="GO:0044877">
    <property type="term" value="F:protein-containing complex binding"/>
    <property type="evidence" value="ECO:0007669"/>
    <property type="project" value="Ensembl"/>
</dbReference>
<dbReference type="GO" id="GO:0005200">
    <property type="term" value="F:structural constituent of cytoskeleton"/>
    <property type="evidence" value="ECO:0000250"/>
    <property type="project" value="UniProtKB"/>
</dbReference>
<dbReference type="GO" id="GO:0030036">
    <property type="term" value="P:actin cytoskeleton organization"/>
    <property type="evidence" value="ECO:0000250"/>
    <property type="project" value="UniProtKB"/>
</dbReference>
<dbReference type="GO" id="GO:0051693">
    <property type="term" value="P:actin filament capping"/>
    <property type="evidence" value="ECO:0007669"/>
    <property type="project" value="UniProtKB-KW"/>
</dbReference>
<dbReference type="GO" id="GO:0007417">
    <property type="term" value="P:central nervous system development"/>
    <property type="evidence" value="ECO:0000315"/>
    <property type="project" value="UniProtKB"/>
</dbReference>
<dbReference type="GO" id="GO:0021556">
    <property type="term" value="P:central nervous system formation"/>
    <property type="evidence" value="ECO:0000315"/>
    <property type="project" value="UniProtKB"/>
</dbReference>
<dbReference type="GO" id="GO:0043001">
    <property type="term" value="P:Golgi to plasma membrane protein transport"/>
    <property type="evidence" value="ECO:0007669"/>
    <property type="project" value="Ensembl"/>
</dbReference>
<dbReference type="GO" id="GO:0071709">
    <property type="term" value="P:membrane assembly"/>
    <property type="evidence" value="ECO:0007669"/>
    <property type="project" value="Ensembl"/>
</dbReference>
<dbReference type="GO" id="GO:0000281">
    <property type="term" value="P:mitotic cytokinesis"/>
    <property type="evidence" value="ECO:0007669"/>
    <property type="project" value="Ensembl"/>
</dbReference>
<dbReference type="GO" id="GO:0007009">
    <property type="term" value="P:plasma membrane organization"/>
    <property type="evidence" value="ECO:0007669"/>
    <property type="project" value="Ensembl"/>
</dbReference>
<dbReference type="GO" id="GO:0032743">
    <property type="term" value="P:positive regulation of interleukin-2 production"/>
    <property type="evidence" value="ECO:0007669"/>
    <property type="project" value="Ensembl"/>
</dbReference>
<dbReference type="GO" id="GO:1903078">
    <property type="term" value="P:positive regulation of protein localization to plasma membrane"/>
    <property type="evidence" value="ECO:0007669"/>
    <property type="project" value="Ensembl"/>
</dbReference>
<dbReference type="GO" id="GO:0072659">
    <property type="term" value="P:protein localization to plasma membrane"/>
    <property type="evidence" value="ECO:0000315"/>
    <property type="project" value="BHF-UCL"/>
</dbReference>
<dbReference type="GO" id="GO:0060390">
    <property type="term" value="P:regulation of SMAD protein signal transduction"/>
    <property type="evidence" value="ECO:0000314"/>
    <property type="project" value="MGI"/>
</dbReference>
<dbReference type="CDD" id="cd21248">
    <property type="entry name" value="CH_SPTB_like_rpt2"/>
    <property type="match status" value="1"/>
</dbReference>
<dbReference type="CDD" id="cd21316">
    <property type="entry name" value="CH_SPTBN1_rpt1"/>
    <property type="match status" value="1"/>
</dbReference>
<dbReference type="CDD" id="cd10571">
    <property type="entry name" value="PH_beta_spectrin"/>
    <property type="match status" value="1"/>
</dbReference>
<dbReference type="CDD" id="cd00176">
    <property type="entry name" value="SPEC"/>
    <property type="match status" value="8"/>
</dbReference>
<dbReference type="FunFam" id="1.10.418.10:FF:000003">
    <property type="entry name" value="Spectrin beta chain"/>
    <property type="match status" value="1"/>
</dbReference>
<dbReference type="FunFam" id="1.10.418.10:FF:000004">
    <property type="entry name" value="Spectrin beta chain"/>
    <property type="match status" value="1"/>
</dbReference>
<dbReference type="FunFam" id="1.20.58.60:FF:000011">
    <property type="entry name" value="Spectrin beta chain"/>
    <property type="match status" value="1"/>
</dbReference>
<dbReference type="FunFam" id="1.20.58.60:FF:000018">
    <property type="entry name" value="Spectrin beta chain"/>
    <property type="match status" value="1"/>
</dbReference>
<dbReference type="FunFam" id="1.20.58.60:FF:000019">
    <property type="entry name" value="Spectrin beta chain"/>
    <property type="match status" value="1"/>
</dbReference>
<dbReference type="FunFam" id="1.20.58.60:FF:000028">
    <property type="entry name" value="Spectrin beta chain"/>
    <property type="match status" value="1"/>
</dbReference>
<dbReference type="FunFam" id="1.20.58.60:FF:000033">
    <property type="entry name" value="Spectrin beta chain"/>
    <property type="match status" value="1"/>
</dbReference>
<dbReference type="FunFam" id="1.20.58.60:FF:000059">
    <property type="entry name" value="Spectrin beta chain"/>
    <property type="match status" value="1"/>
</dbReference>
<dbReference type="FunFam" id="1.20.58.60:FF:000083">
    <property type="entry name" value="Spectrin beta chain"/>
    <property type="match status" value="1"/>
</dbReference>
<dbReference type="FunFam" id="1.20.58.60:FF:000099">
    <property type="entry name" value="Spectrin beta chain"/>
    <property type="match status" value="1"/>
</dbReference>
<dbReference type="FunFam" id="1.20.58.60:FF:000105">
    <property type="entry name" value="Spectrin beta chain"/>
    <property type="match status" value="1"/>
</dbReference>
<dbReference type="FunFam" id="1.20.58.60:FF:000153">
    <property type="entry name" value="Spectrin beta chain"/>
    <property type="match status" value="1"/>
</dbReference>
<dbReference type="FunFam" id="1.20.58.60:FF:000158">
    <property type="entry name" value="Spectrin beta chain"/>
    <property type="match status" value="1"/>
</dbReference>
<dbReference type="FunFam" id="2.30.29.30:FF:000024">
    <property type="entry name" value="Spectrin beta chain"/>
    <property type="match status" value="1"/>
</dbReference>
<dbReference type="Gene3D" id="1.20.58.60">
    <property type="match status" value="12"/>
</dbReference>
<dbReference type="Gene3D" id="1.10.418.10">
    <property type="entry name" value="Calponin-like domain"/>
    <property type="match status" value="2"/>
</dbReference>
<dbReference type="Gene3D" id="2.30.29.30">
    <property type="entry name" value="Pleckstrin-homology domain (PH domain)/Phosphotyrosine-binding domain (PTB)"/>
    <property type="match status" value="1"/>
</dbReference>
<dbReference type="InterPro" id="IPR001589">
    <property type="entry name" value="Actinin_actin-bd_CS"/>
</dbReference>
<dbReference type="InterPro" id="IPR001715">
    <property type="entry name" value="CH_dom"/>
</dbReference>
<dbReference type="InterPro" id="IPR036872">
    <property type="entry name" value="CH_dom_sf"/>
</dbReference>
<dbReference type="InterPro" id="IPR011993">
    <property type="entry name" value="PH-like_dom_sf"/>
</dbReference>
<dbReference type="InterPro" id="IPR041681">
    <property type="entry name" value="PH_9"/>
</dbReference>
<dbReference type="InterPro" id="IPR001605">
    <property type="entry name" value="PH_dom-spectrin-type"/>
</dbReference>
<dbReference type="InterPro" id="IPR001849">
    <property type="entry name" value="PH_domain"/>
</dbReference>
<dbReference type="InterPro" id="IPR018159">
    <property type="entry name" value="Spectrin/alpha-actinin"/>
</dbReference>
<dbReference type="InterPro" id="IPR016343">
    <property type="entry name" value="Spectrin_bsu"/>
</dbReference>
<dbReference type="InterPro" id="IPR002017">
    <property type="entry name" value="Spectrin_repeat"/>
</dbReference>
<dbReference type="PANTHER" id="PTHR11915">
    <property type="entry name" value="SPECTRIN/FILAMIN RELATED CYTOSKELETAL PROTEIN"/>
    <property type="match status" value="1"/>
</dbReference>
<dbReference type="Pfam" id="PF00307">
    <property type="entry name" value="CH"/>
    <property type="match status" value="2"/>
</dbReference>
<dbReference type="Pfam" id="PF15410">
    <property type="entry name" value="PH_9"/>
    <property type="match status" value="1"/>
</dbReference>
<dbReference type="Pfam" id="PF00435">
    <property type="entry name" value="Spectrin"/>
    <property type="match status" value="17"/>
</dbReference>
<dbReference type="PIRSF" id="PIRSF002297">
    <property type="entry name" value="Spectrin_beta_subunit"/>
    <property type="match status" value="1"/>
</dbReference>
<dbReference type="PRINTS" id="PR00683">
    <property type="entry name" value="SPECTRINPH"/>
</dbReference>
<dbReference type="SMART" id="SM00033">
    <property type="entry name" value="CH"/>
    <property type="match status" value="2"/>
</dbReference>
<dbReference type="SMART" id="SM00233">
    <property type="entry name" value="PH"/>
    <property type="match status" value="1"/>
</dbReference>
<dbReference type="SMART" id="SM00150">
    <property type="entry name" value="SPEC"/>
    <property type="match status" value="17"/>
</dbReference>
<dbReference type="SUPFAM" id="SSF47576">
    <property type="entry name" value="Calponin-homology domain, CH-domain"/>
    <property type="match status" value="1"/>
</dbReference>
<dbReference type="SUPFAM" id="SSF50729">
    <property type="entry name" value="PH domain-like"/>
    <property type="match status" value="1"/>
</dbReference>
<dbReference type="SUPFAM" id="SSF46966">
    <property type="entry name" value="Spectrin repeat"/>
    <property type="match status" value="13"/>
</dbReference>
<dbReference type="PROSITE" id="PS00019">
    <property type="entry name" value="ACTININ_1"/>
    <property type="match status" value="1"/>
</dbReference>
<dbReference type="PROSITE" id="PS00020">
    <property type="entry name" value="ACTININ_2"/>
    <property type="match status" value="1"/>
</dbReference>
<dbReference type="PROSITE" id="PS50021">
    <property type="entry name" value="CH"/>
    <property type="match status" value="2"/>
</dbReference>
<dbReference type="PROSITE" id="PS50003">
    <property type="entry name" value="PH_DOMAIN"/>
    <property type="match status" value="1"/>
</dbReference>
<reference key="1">
    <citation type="journal article" date="1993" name="Brain Res. Mol. Brain Res.">
        <title>The complete amino acid sequence for brain beta spectrin (beta fodrin): relationship to globin sequences.</title>
        <authorList>
            <person name="Ma Y."/>
            <person name="Zimmer W.E."/>
            <person name="Riederer B.M."/>
            <person name="Goodman S.R."/>
        </authorList>
    </citation>
    <scope>NUCLEOTIDE SEQUENCE [MRNA] (ISOFORM 1)</scope>
    <source>
        <strain>BALB/cJ</strain>
    </source>
</reference>
<reference key="2">
    <citation type="journal article" date="1999" name="Oncogene">
        <title>Elf3 encodes a novel 200-kD beta-spectrin: role in liver development.</title>
        <authorList>
            <person name="Mishra L."/>
            <person name="Cai T."/>
            <person name="Yu P."/>
            <person name="Monga S.P."/>
            <person name="Mishra B."/>
        </authorList>
    </citation>
    <scope>NUCLEOTIDE SEQUENCE [MRNA] (ISOFORM 2)</scope>
    <scope>TISSUE SPECIFICITY</scope>
    <scope>DEVELOPMENTAL STAGE</scope>
    <scope>SUBCELLULAR LOCATION</scope>
    <source>
        <strain>C57BL/6J</strain>
        <tissue>Liver</tissue>
    </source>
</reference>
<reference key="3">
    <citation type="journal article" date="2009" name="PLoS Biol.">
        <title>Lineage-specific biology revealed by a finished genome assembly of the mouse.</title>
        <authorList>
            <person name="Church D.M."/>
            <person name="Goodstadt L."/>
            <person name="Hillier L.W."/>
            <person name="Zody M.C."/>
            <person name="Goldstein S."/>
            <person name="She X."/>
            <person name="Bult C.J."/>
            <person name="Agarwala R."/>
            <person name="Cherry J.L."/>
            <person name="DiCuccio M."/>
            <person name="Hlavina W."/>
            <person name="Kapustin Y."/>
            <person name="Meric P."/>
            <person name="Maglott D."/>
            <person name="Birtle Z."/>
            <person name="Marques A.C."/>
            <person name="Graves T."/>
            <person name="Zhou S."/>
            <person name="Teague B."/>
            <person name="Potamousis K."/>
            <person name="Churas C."/>
            <person name="Place M."/>
            <person name="Herschleb J."/>
            <person name="Runnheim R."/>
            <person name="Forrest D."/>
            <person name="Amos-Landgraf J."/>
            <person name="Schwartz D.C."/>
            <person name="Cheng Z."/>
            <person name="Lindblad-Toh K."/>
            <person name="Eichler E.E."/>
            <person name="Ponting C.P."/>
        </authorList>
    </citation>
    <scope>NUCLEOTIDE SEQUENCE [LARGE SCALE GENOMIC DNA]</scope>
    <source>
        <strain>C57BL/6J</strain>
    </source>
</reference>
<reference key="4">
    <citation type="journal article" date="2005" name="Science">
        <title>The transcriptional landscape of the mammalian genome.</title>
        <authorList>
            <person name="Carninci P."/>
            <person name="Kasukawa T."/>
            <person name="Katayama S."/>
            <person name="Gough J."/>
            <person name="Frith M.C."/>
            <person name="Maeda N."/>
            <person name="Oyama R."/>
            <person name="Ravasi T."/>
            <person name="Lenhard B."/>
            <person name="Wells C."/>
            <person name="Kodzius R."/>
            <person name="Shimokawa K."/>
            <person name="Bajic V.B."/>
            <person name="Brenner S.E."/>
            <person name="Batalov S."/>
            <person name="Forrest A.R."/>
            <person name="Zavolan M."/>
            <person name="Davis M.J."/>
            <person name="Wilming L.G."/>
            <person name="Aidinis V."/>
            <person name="Allen J.E."/>
            <person name="Ambesi-Impiombato A."/>
            <person name="Apweiler R."/>
            <person name="Aturaliya R.N."/>
            <person name="Bailey T.L."/>
            <person name="Bansal M."/>
            <person name="Baxter L."/>
            <person name="Beisel K.W."/>
            <person name="Bersano T."/>
            <person name="Bono H."/>
            <person name="Chalk A.M."/>
            <person name="Chiu K.P."/>
            <person name="Choudhary V."/>
            <person name="Christoffels A."/>
            <person name="Clutterbuck D.R."/>
            <person name="Crowe M.L."/>
            <person name="Dalla E."/>
            <person name="Dalrymple B.P."/>
            <person name="de Bono B."/>
            <person name="Della Gatta G."/>
            <person name="di Bernardo D."/>
            <person name="Down T."/>
            <person name="Engstrom P."/>
            <person name="Fagiolini M."/>
            <person name="Faulkner G."/>
            <person name="Fletcher C.F."/>
            <person name="Fukushima T."/>
            <person name="Furuno M."/>
            <person name="Futaki S."/>
            <person name="Gariboldi M."/>
            <person name="Georgii-Hemming P."/>
            <person name="Gingeras T.R."/>
            <person name="Gojobori T."/>
            <person name="Green R.E."/>
            <person name="Gustincich S."/>
            <person name="Harbers M."/>
            <person name="Hayashi Y."/>
            <person name="Hensch T.K."/>
            <person name="Hirokawa N."/>
            <person name="Hill D."/>
            <person name="Huminiecki L."/>
            <person name="Iacono M."/>
            <person name="Ikeo K."/>
            <person name="Iwama A."/>
            <person name="Ishikawa T."/>
            <person name="Jakt M."/>
            <person name="Kanapin A."/>
            <person name="Katoh M."/>
            <person name="Kawasawa Y."/>
            <person name="Kelso J."/>
            <person name="Kitamura H."/>
            <person name="Kitano H."/>
            <person name="Kollias G."/>
            <person name="Krishnan S.P."/>
            <person name="Kruger A."/>
            <person name="Kummerfeld S.K."/>
            <person name="Kurochkin I.V."/>
            <person name="Lareau L.F."/>
            <person name="Lazarevic D."/>
            <person name="Lipovich L."/>
            <person name="Liu J."/>
            <person name="Liuni S."/>
            <person name="McWilliam S."/>
            <person name="Madan Babu M."/>
            <person name="Madera M."/>
            <person name="Marchionni L."/>
            <person name="Matsuda H."/>
            <person name="Matsuzawa S."/>
            <person name="Miki H."/>
            <person name="Mignone F."/>
            <person name="Miyake S."/>
            <person name="Morris K."/>
            <person name="Mottagui-Tabar S."/>
            <person name="Mulder N."/>
            <person name="Nakano N."/>
            <person name="Nakauchi H."/>
            <person name="Ng P."/>
            <person name="Nilsson R."/>
            <person name="Nishiguchi S."/>
            <person name="Nishikawa S."/>
            <person name="Nori F."/>
            <person name="Ohara O."/>
            <person name="Okazaki Y."/>
            <person name="Orlando V."/>
            <person name="Pang K.C."/>
            <person name="Pavan W.J."/>
            <person name="Pavesi G."/>
            <person name="Pesole G."/>
            <person name="Petrovsky N."/>
            <person name="Piazza S."/>
            <person name="Reed J."/>
            <person name="Reid J.F."/>
            <person name="Ring B.Z."/>
            <person name="Ringwald M."/>
            <person name="Rost B."/>
            <person name="Ruan Y."/>
            <person name="Salzberg S.L."/>
            <person name="Sandelin A."/>
            <person name="Schneider C."/>
            <person name="Schoenbach C."/>
            <person name="Sekiguchi K."/>
            <person name="Semple C.A."/>
            <person name="Seno S."/>
            <person name="Sessa L."/>
            <person name="Sheng Y."/>
            <person name="Shibata Y."/>
            <person name="Shimada H."/>
            <person name="Shimada K."/>
            <person name="Silva D."/>
            <person name="Sinclair B."/>
            <person name="Sperling S."/>
            <person name="Stupka E."/>
            <person name="Sugiura K."/>
            <person name="Sultana R."/>
            <person name="Takenaka Y."/>
            <person name="Taki K."/>
            <person name="Tammoja K."/>
            <person name="Tan S.L."/>
            <person name="Tang S."/>
            <person name="Taylor M.S."/>
            <person name="Tegner J."/>
            <person name="Teichmann S.A."/>
            <person name="Ueda H.R."/>
            <person name="van Nimwegen E."/>
            <person name="Verardo R."/>
            <person name="Wei C.L."/>
            <person name="Yagi K."/>
            <person name="Yamanishi H."/>
            <person name="Zabarovsky E."/>
            <person name="Zhu S."/>
            <person name="Zimmer A."/>
            <person name="Hide W."/>
            <person name="Bult C."/>
            <person name="Grimmond S.M."/>
            <person name="Teasdale R.D."/>
            <person name="Liu E.T."/>
            <person name="Brusic V."/>
            <person name="Quackenbush J."/>
            <person name="Wahlestedt C."/>
            <person name="Mattick J.S."/>
            <person name="Hume D.A."/>
            <person name="Kai C."/>
            <person name="Sasaki D."/>
            <person name="Tomaru Y."/>
            <person name="Fukuda S."/>
            <person name="Kanamori-Katayama M."/>
            <person name="Suzuki M."/>
            <person name="Aoki J."/>
            <person name="Arakawa T."/>
            <person name="Iida J."/>
            <person name="Imamura K."/>
            <person name="Itoh M."/>
            <person name="Kato T."/>
            <person name="Kawaji H."/>
            <person name="Kawagashira N."/>
            <person name="Kawashima T."/>
            <person name="Kojima M."/>
            <person name="Kondo S."/>
            <person name="Konno H."/>
            <person name="Nakano K."/>
            <person name="Ninomiya N."/>
            <person name="Nishio T."/>
            <person name="Okada M."/>
            <person name="Plessy C."/>
            <person name="Shibata K."/>
            <person name="Shiraki T."/>
            <person name="Suzuki S."/>
            <person name="Tagami M."/>
            <person name="Waki K."/>
            <person name="Watahiki A."/>
            <person name="Okamura-Oho Y."/>
            <person name="Suzuki H."/>
            <person name="Kawai J."/>
            <person name="Hayashizaki Y."/>
        </authorList>
    </citation>
    <scope>NUCLEOTIDE SEQUENCE [LARGE SCALE MRNA] OF 1-399 (ISOFORM 2)</scope>
    <source>
        <strain>C57BL/6J</strain>
        <tissue>Thymus</tissue>
    </source>
</reference>
<reference key="5">
    <citation type="journal article" date="2003" name="J. Biol. Chem.">
        <title>Identification of targets for calcium signaling through the copine family of proteins. Characterization of a coiled-coil copine-binding motif.</title>
        <authorList>
            <person name="Tomsig J.L."/>
            <person name="Snyder S.L."/>
            <person name="Creutz C.E."/>
        </authorList>
    </citation>
    <scope>INTERACTION WITH CPNE4</scope>
</reference>
<reference key="6">
    <citation type="journal article" date="2004" name="J. Biol. Chem.">
        <title>Ankyrin-B targets beta2-spectrin to an intracellular compartment in neonatal cardiomyocytes.</title>
        <authorList>
            <person name="Mohler P.J."/>
            <person name="Yoon W."/>
            <person name="Bennett V."/>
        </authorList>
    </citation>
    <scope>INTERACTION WITH ANK2</scope>
    <scope>TISSUE SPECIFICITY</scope>
    <scope>SUBCELLULAR LOCATION</scope>
</reference>
<reference key="7">
    <citation type="journal article" date="2004" name="Mol. Cell. Proteomics">
        <title>Phosphoproteomic analysis of the developing mouse brain.</title>
        <authorList>
            <person name="Ballif B.A."/>
            <person name="Villen J."/>
            <person name="Beausoleil S.A."/>
            <person name="Schwartz D."/>
            <person name="Gygi S.P."/>
        </authorList>
    </citation>
    <scope>PHOSPHORYLATION [LARGE SCALE ANALYSIS] AT SER-2127 AND SER-2137</scope>
    <scope>IDENTIFICATION BY MASS SPECTROMETRY [LARGE SCALE ANALYSIS]</scope>
    <source>
        <tissue>Embryonic brain</tissue>
    </source>
</reference>
<reference key="8">
    <citation type="journal article" date="2006" name="Mol. Cell. Proteomics">
        <title>Comprehensive identification of phosphorylation sites in postsynaptic density preparations.</title>
        <authorList>
            <person name="Trinidad J.C."/>
            <person name="Specht C.G."/>
            <person name="Thalhammer A."/>
            <person name="Schoepfer R."/>
            <person name="Burlingame A.L."/>
        </authorList>
    </citation>
    <scope>PHOSPHORYLATION [LARGE SCALE ANALYSIS] AT SER-2102 AND THR-2194</scope>
    <scope>IDENTIFICATION BY MASS SPECTROMETRY [LARGE SCALE ANALYSIS]</scope>
    <source>
        <tissue>Brain</tissue>
    </source>
</reference>
<reference key="9">
    <citation type="journal article" date="2006" name="Mol. Cell. Proteomics">
        <title>O-linked N-acetylglucosamine proteomics of postsynaptic density preparations using lectin weak affinity chromatography and mass spectrometry.</title>
        <authorList>
            <person name="Vosseller K."/>
            <person name="Trinidad J.C."/>
            <person name="Chalkley R.J."/>
            <person name="Specht C.G."/>
            <person name="Thalhammer A."/>
            <person name="Lynn A.J."/>
            <person name="Snedecor J.O."/>
            <person name="Guan S."/>
            <person name="Medzihradszky K.F."/>
            <person name="Maltby D.A."/>
            <person name="Schoepfer R."/>
            <person name="Burlingame A.L."/>
        </authorList>
    </citation>
    <scope>GLYCOSYLATION [LARGE SCALE ANALYSIS] AT SER-2323</scope>
    <source>
        <tissue>Brain</tissue>
    </source>
</reference>
<reference key="10">
    <citation type="journal article" date="2007" name="Mol. Cell. Proteomics">
        <title>Qualitative and quantitative analyses of protein phosphorylation in naive and stimulated mouse synaptosomal preparations.</title>
        <authorList>
            <person name="Munton R.P."/>
            <person name="Tweedie-Cullen R."/>
            <person name="Livingstone-Zatchej M."/>
            <person name="Weinandy F."/>
            <person name="Waidelich M."/>
            <person name="Longo D."/>
            <person name="Gehrig P."/>
            <person name="Potthast F."/>
            <person name="Rutishauser D."/>
            <person name="Gerrits B."/>
            <person name="Panse C."/>
            <person name="Schlapbach R."/>
            <person name="Mansuy I.M."/>
        </authorList>
    </citation>
    <scope>IDENTIFICATION BY MASS SPECTROMETRY [LARGE SCALE ANALYSIS]</scope>
    <source>
        <tissue>Brain cortex</tissue>
    </source>
</reference>
<reference key="11">
    <citation type="journal article" date="2007" name="Proc. Natl. Acad. Sci. U.S.A.">
        <title>Large-scale phosphorylation analysis of mouse liver.</title>
        <authorList>
            <person name="Villen J."/>
            <person name="Beausoleil S.A."/>
            <person name="Gerber S.A."/>
            <person name="Gygi S.P."/>
        </authorList>
    </citation>
    <scope>PHOSPHORYLATION [LARGE SCALE ANALYSIS] AT SER-2137</scope>
    <scope>IDENTIFICATION BY MASS SPECTROMETRY [LARGE SCALE ANALYSIS]</scope>
    <source>
        <tissue>Liver</tissue>
    </source>
</reference>
<reference key="12">
    <citation type="journal article" date="2008" name="J. Proteome Res.">
        <title>Large-scale identification and evolution indexing of tyrosine phosphorylation sites from murine brain.</title>
        <authorList>
            <person name="Ballif B.A."/>
            <person name="Carey G.R."/>
            <person name="Sunyaev S.R."/>
            <person name="Gygi S.P."/>
        </authorList>
    </citation>
    <scope>PHOSPHORYLATION [LARGE SCALE ANALYSIS] AT TYR-1805</scope>
    <scope>IDENTIFICATION BY MASS SPECTROMETRY [LARGE SCALE ANALYSIS]</scope>
    <source>
        <tissue>Brain</tissue>
    </source>
</reference>
<reference key="13">
    <citation type="journal article" date="2008" name="J. Proteome Res.">
        <title>Specific phosphopeptide enrichment with immobilized titanium ion affinity chromatography adsorbent for phosphoproteome analysis.</title>
        <authorList>
            <person name="Zhou H."/>
            <person name="Ye M."/>
            <person name="Dong J."/>
            <person name="Han G."/>
            <person name="Jiang X."/>
            <person name="Wu R."/>
            <person name="Zou H."/>
        </authorList>
    </citation>
    <scope>PHOSPHORYLATION [LARGE SCALE ANALYSIS] AT SER-2102</scope>
    <scope>IDENTIFICATION BY MASS SPECTROMETRY [LARGE SCALE ANALYSIS]</scope>
    <source>
        <tissue>Liver</tissue>
    </source>
</reference>
<reference key="14">
    <citation type="journal article" date="2009" name="Mol. Cell. Proteomics">
        <title>Large scale localization of protein phosphorylation by use of electron capture dissociation mass spectrometry.</title>
        <authorList>
            <person name="Sweet S.M."/>
            <person name="Bailey C.M."/>
            <person name="Cunningham D.L."/>
            <person name="Heath J.K."/>
            <person name="Cooper H.J."/>
        </authorList>
    </citation>
    <scope>PHOSPHORYLATION [LARGE SCALE ANALYSIS] AT SER-2164 AND SER-2168</scope>
    <scope>IDENTIFICATION BY MASS SPECTROMETRY [LARGE SCALE ANALYSIS]</scope>
    <source>
        <tissue>Embryonic fibroblast</tissue>
    </source>
</reference>
<reference key="15">
    <citation type="journal article" date="2010" name="Cell">
        <title>A tissue-specific atlas of mouse protein phosphorylation and expression.</title>
        <authorList>
            <person name="Huttlin E.L."/>
            <person name="Jedrychowski M.P."/>
            <person name="Elias J.E."/>
            <person name="Goswami T."/>
            <person name="Rad R."/>
            <person name="Beausoleil S.A."/>
            <person name="Villen J."/>
            <person name="Haas W."/>
            <person name="Sowa M.E."/>
            <person name="Gygi S.P."/>
        </authorList>
    </citation>
    <scope>PHOSPHORYLATION [LARGE SCALE ANALYSIS] AT SER-36; SER-228; SER-817; SER-903; SER-1076; SER-1079; SER-2102; SER-2127; SER-2137; THR-2146; SER-2147; THR-2158; SER-2160; SER-2163; SER-2164; SER-2168; THR-2170; SER-2183; THR-2186; THR-2194 AND SER-2340</scope>
    <scope>PHOSPHORYLATION [LARGE SCALE ANALYSIS] AT SER-14 (ISOFORM 2)</scope>
    <scope>IDENTIFICATION BY MASS SPECTROMETRY [LARGE SCALE ANALYSIS]</scope>
    <source>
        <tissue>Brain</tissue>
        <tissue>Brown adipose tissue</tissue>
        <tissue>Heart</tissue>
        <tissue>Kidney</tissue>
        <tissue>Liver</tissue>
        <tissue>Lung</tissue>
        <tissue>Pancreas</tissue>
        <tissue>Spleen</tissue>
        <tissue>Testis</tissue>
    </source>
</reference>
<reference key="16">
    <citation type="journal article" date="2021" name="Nat. Genet.">
        <title>Pathogenic SPTBN1 variants cause an autosomal dominant neurodevelopmental syndrome.</title>
        <authorList>
            <consortium name="Undiagnosed Diseases Network"/>
            <consortium name="Genomics England Research Consortium"/>
            <person name="Cousin M.A."/>
            <person name="Creighton B.A."/>
            <person name="Breau K.A."/>
            <person name="Spillmann R.C."/>
            <person name="Torti E."/>
            <person name="Dontu S."/>
            <person name="Tripathi S."/>
            <person name="Ajit D."/>
            <person name="Edwards R.J."/>
            <person name="Afriyie S."/>
            <person name="Bay J.C."/>
            <person name="Harper K.M."/>
            <person name="Beltran A.A."/>
            <person name="Munoz L.J."/>
            <person name="Falcon Rodriguez L."/>
            <person name="Stankewich M.C."/>
            <person name="Person R.E."/>
            <person name="Si Y."/>
            <person name="Normand E.A."/>
            <person name="Blevins A."/>
            <person name="May A.S."/>
            <person name="Bier L."/>
            <person name="Aggarwal V."/>
            <person name="Mancini G.M.S."/>
            <person name="van Slegtenhorst M.A."/>
            <person name="Cremer K."/>
            <person name="Becker J."/>
            <person name="Engels H."/>
            <person name="Aretz S."/>
            <person name="MacKenzie J.J."/>
            <person name="Brilstra E."/>
            <person name="van Gassen K.L.I."/>
            <person name="van Jaarsveld R.H."/>
            <person name="Oegema R."/>
            <person name="Parsons G.M."/>
            <person name="Mark P."/>
            <person name="Helbig I."/>
            <person name="McKeown S.E."/>
            <person name="Stratton R."/>
            <person name="Cogne B."/>
            <person name="Isidor B."/>
            <person name="Cacheiro P."/>
            <person name="Smedley D."/>
            <person name="Firth H.V."/>
            <person name="Bierhals T."/>
            <person name="Kloth K."/>
            <person name="Weiss D."/>
            <person name="Fairley C."/>
            <person name="Shieh J.T."/>
            <person name="Kritzer A."/>
            <person name="Jayakar P."/>
            <person name="Kurtz-Nelson E."/>
            <person name="Bernier R.A."/>
            <person name="Wang T."/>
            <person name="Eichler E.E."/>
            <person name="van de Laar I.M.B.H."/>
            <person name="McConkie-Rosell A."/>
            <person name="McDonald M.T."/>
            <person name="Kemppainen J."/>
            <person name="Lanpher B.C."/>
            <person name="Schultz-Rogers L.E."/>
            <person name="Gunderson L.B."/>
            <person name="Pichurin P.N."/>
            <person name="Yoon G."/>
            <person name="Zech M."/>
            <person name="Jech R."/>
            <person name="Winkelmann J."/>
            <person name="Beltran A.S."/>
            <person name="Zimmermann M.T."/>
            <person name="Temple B."/>
            <person name="Moy S.S."/>
            <person name="Klee E.W."/>
            <person name="Tan Q.K."/>
            <person name="Lorenzo D.N."/>
        </authorList>
    </citation>
    <scope>FUNCTION</scope>
</reference>
<reference key="17">
    <citation type="journal article" date="1994" name="Nature">
        <title>Structure of the pleckstrin homology domain from beta-spectrin.</title>
        <authorList>
            <person name="Macias M.J."/>
            <person name="Musacchio A."/>
            <person name="Ponstingl H."/>
            <person name="Nilges M."/>
            <person name="Saraste M."/>
            <person name="Oschkinat H."/>
        </authorList>
    </citation>
    <scope>STRUCTURE BY NMR OF 2199-2304</scope>
</reference>
<reference key="18">
    <citation type="journal article" date="1997" name="J. Mol. Biol.">
        <title>Automated NOESY interpretation with ambiguous distance restraints: the refined NMR solution structure of the pleckstrin homology domain from beta-spectrin.</title>
        <authorList>
            <person name="Nilges M."/>
            <person name="Macias M.J."/>
            <person name="O'Donoghue S.I."/>
            <person name="Oschkinat H."/>
        </authorList>
    </citation>
    <scope>STRUCTURE BY NMR OF 2199-2304</scope>
</reference>
<reference key="19">
    <citation type="journal article" date="1995" name="EMBO J.">
        <title>Structure of the binding site for inositol phosphates in a PH domain.</title>
        <authorList>
            <person name="Hyvoenen M."/>
            <person name="Macias M.J."/>
            <person name="Nilges M."/>
            <person name="Oschkinat H."/>
            <person name="Saraste M."/>
            <person name="Wilmanns M."/>
        </authorList>
    </citation>
    <scope>X-RAY CRYSTALLOGRAPHY (2.0 ANGSTROMS) OF 2199-2304</scope>
</reference>
<name>SPTB2_MOUSE</name>
<gene>
    <name type="primary">Sptbn1</name>
    <name type="synonym">Elf</name>
    <name type="synonym">Spnb-2</name>
    <name type="synonym">Spnb2</name>
    <name type="synonym">Sptb2</name>
</gene>